<reference key="1">
    <citation type="journal article" date="2005" name="Genomics">
        <title>The ribonuclease A superfamily of mammals and birds: identifying new members and tracing evolutionary histories.</title>
        <authorList>
            <person name="Cho S."/>
            <person name="Beintema J.J."/>
            <person name="Zhang J."/>
        </authorList>
    </citation>
    <scope>NUCLEOTIDE SEQUENCE [MRNA]</scope>
</reference>
<reference key="2">
    <citation type="journal article" date="2004" name="Genome Res.">
        <title>The status, quality, and expansion of the NIH full-length cDNA project: the Mammalian Gene Collection (MGC).</title>
        <authorList>
            <consortium name="The MGC Project Team"/>
        </authorList>
    </citation>
    <scope>NUCLEOTIDE SEQUENCE [LARGE SCALE MRNA]</scope>
    <source>
        <tissue>Brain</tissue>
    </source>
</reference>
<gene>
    <name type="primary">RNASE13</name>
</gene>
<protein>
    <recommendedName>
        <fullName>Probable inactive ribonuclease-like protein 13</fullName>
    </recommendedName>
</protein>
<accession>Q5GAN3</accession>
<organism>
    <name type="scientific">Homo sapiens</name>
    <name type="common">Human</name>
    <dbReference type="NCBI Taxonomy" id="9606"/>
    <lineage>
        <taxon>Eukaryota</taxon>
        <taxon>Metazoa</taxon>
        <taxon>Chordata</taxon>
        <taxon>Craniata</taxon>
        <taxon>Vertebrata</taxon>
        <taxon>Euteleostomi</taxon>
        <taxon>Mammalia</taxon>
        <taxon>Eutheria</taxon>
        <taxon>Euarchontoglires</taxon>
        <taxon>Primates</taxon>
        <taxon>Haplorrhini</taxon>
        <taxon>Catarrhini</taxon>
        <taxon>Hominidae</taxon>
        <taxon>Homo</taxon>
    </lineage>
</organism>
<evidence type="ECO:0000255" key="1"/>
<evidence type="ECO:0000305" key="2"/>
<name>RNS13_HUMAN</name>
<feature type="signal peptide" evidence="1">
    <location>
        <begin position="1"/>
        <end position="20"/>
    </location>
</feature>
<feature type="chain" id="PRO_0000308705" description="Probable inactive ribonuclease-like protein 13">
    <location>
        <begin position="21"/>
        <end position="156"/>
    </location>
</feature>
<feature type="glycosylation site" description="N-linked (GlcNAc...) asparagine" evidence="1">
    <location>
        <position position="126"/>
    </location>
</feature>
<feature type="sequence variant" id="VAR_036874" description="In dbSNP:rs2277847.">
    <original>S</original>
    <variation>A</variation>
    <location>
        <position position="139"/>
    </location>
</feature>
<keyword id="KW-0325">Glycoprotein</keyword>
<keyword id="KW-1267">Proteomics identification</keyword>
<keyword id="KW-1185">Reference proteome</keyword>
<keyword id="KW-0964">Secreted</keyword>
<keyword id="KW-0732">Signal</keyword>
<dbReference type="EMBL" id="AY665808">
    <property type="protein sequence ID" value="AAV87186.1"/>
    <property type="molecule type" value="mRNA"/>
</dbReference>
<dbReference type="EMBL" id="BC044831">
    <property type="protein sequence ID" value="AAH44831.1"/>
    <property type="molecule type" value="mRNA"/>
</dbReference>
<dbReference type="CCDS" id="CCDS32039.1"/>
<dbReference type="RefSeq" id="NP_001012264.1">
    <property type="nucleotide sequence ID" value="NM_001012264.4"/>
</dbReference>
<dbReference type="SMR" id="Q5GAN3"/>
<dbReference type="BioGRID" id="136351">
    <property type="interactions" value="33"/>
</dbReference>
<dbReference type="FunCoup" id="Q5GAN3">
    <property type="interactions" value="11"/>
</dbReference>
<dbReference type="IntAct" id="Q5GAN3">
    <property type="interactions" value="10"/>
</dbReference>
<dbReference type="STRING" id="9606.ENSP00000372410"/>
<dbReference type="GlyCosmos" id="Q5GAN3">
    <property type="glycosylation" value="1 site, No reported glycans"/>
</dbReference>
<dbReference type="GlyGen" id="Q5GAN3">
    <property type="glycosylation" value="1 site"/>
</dbReference>
<dbReference type="iPTMnet" id="Q5GAN3"/>
<dbReference type="PhosphoSitePlus" id="Q5GAN3"/>
<dbReference type="BioMuta" id="RNASE13"/>
<dbReference type="DMDM" id="74741480"/>
<dbReference type="MassIVE" id="Q5GAN3"/>
<dbReference type="PaxDb" id="9606-ENSP00000372410"/>
<dbReference type="PeptideAtlas" id="Q5GAN3"/>
<dbReference type="ProteomicsDB" id="62823"/>
<dbReference type="Antibodypedia" id="47225">
    <property type="antibodies" value="97 antibodies from 17 providers"/>
</dbReference>
<dbReference type="DNASU" id="440163"/>
<dbReference type="Ensembl" id="ENST00000382951.4">
    <property type="protein sequence ID" value="ENSP00000372410.3"/>
    <property type="gene ID" value="ENSG00000206150.4"/>
</dbReference>
<dbReference type="GeneID" id="440163"/>
<dbReference type="KEGG" id="hsa:440163"/>
<dbReference type="MANE-Select" id="ENST00000382951.4">
    <property type="protein sequence ID" value="ENSP00000372410.3"/>
    <property type="RefSeq nucleotide sequence ID" value="NM_001012264.4"/>
    <property type="RefSeq protein sequence ID" value="NP_001012264.1"/>
</dbReference>
<dbReference type="AGR" id="HGNC:25285"/>
<dbReference type="CTD" id="440163"/>
<dbReference type="DisGeNET" id="440163"/>
<dbReference type="GeneCards" id="RNASE13"/>
<dbReference type="HGNC" id="HGNC:25285">
    <property type="gene designation" value="RNASE13"/>
</dbReference>
<dbReference type="HPA" id="ENSG00000206150">
    <property type="expression patterns" value="Tissue enriched (epididymis)"/>
</dbReference>
<dbReference type="neXtProt" id="NX_Q5GAN3"/>
<dbReference type="PharmGKB" id="PA134922548"/>
<dbReference type="VEuPathDB" id="HostDB:ENSG00000206150"/>
<dbReference type="eggNOG" id="ENOG502SRBA">
    <property type="taxonomic scope" value="Eukaryota"/>
</dbReference>
<dbReference type="GeneTree" id="ENSGT00390000015830"/>
<dbReference type="HOGENOM" id="CLU_1685971_0_0_1"/>
<dbReference type="InParanoid" id="Q5GAN3"/>
<dbReference type="OMA" id="KQPPTSC"/>
<dbReference type="OrthoDB" id="9445850at2759"/>
<dbReference type="PAN-GO" id="Q5GAN3">
    <property type="GO annotations" value="1 GO annotation based on evolutionary models"/>
</dbReference>
<dbReference type="PhylomeDB" id="Q5GAN3"/>
<dbReference type="TreeFam" id="TF343810"/>
<dbReference type="PathwayCommons" id="Q5GAN3"/>
<dbReference type="SignaLink" id="Q5GAN3"/>
<dbReference type="BioGRID-ORCS" id="440163">
    <property type="hits" value="6 hits in 1136 CRISPR screens"/>
</dbReference>
<dbReference type="GenomeRNAi" id="440163"/>
<dbReference type="Pharos" id="Q5GAN3">
    <property type="development level" value="Tbio"/>
</dbReference>
<dbReference type="PRO" id="PR:Q5GAN3"/>
<dbReference type="Proteomes" id="UP000005640">
    <property type="component" value="Chromosome 14"/>
</dbReference>
<dbReference type="RNAct" id="Q5GAN3">
    <property type="molecule type" value="protein"/>
</dbReference>
<dbReference type="Bgee" id="ENSG00000206150">
    <property type="expression patterns" value="Expressed in right lobe of liver and 47 other cell types or tissues"/>
</dbReference>
<dbReference type="ExpressionAtlas" id="Q5GAN3">
    <property type="expression patterns" value="baseline and differential"/>
</dbReference>
<dbReference type="GO" id="GO:0005576">
    <property type="term" value="C:extracellular region"/>
    <property type="evidence" value="ECO:0007669"/>
    <property type="project" value="UniProtKB-SubCell"/>
</dbReference>
<dbReference type="GO" id="GO:0003676">
    <property type="term" value="F:nucleic acid binding"/>
    <property type="evidence" value="ECO:0007669"/>
    <property type="project" value="InterPro"/>
</dbReference>
<dbReference type="GO" id="GO:0050830">
    <property type="term" value="P:defense response to Gram-positive bacterium"/>
    <property type="evidence" value="ECO:0000318"/>
    <property type="project" value="GO_Central"/>
</dbReference>
<dbReference type="CDD" id="cd00163">
    <property type="entry name" value="RNase_A"/>
    <property type="match status" value="1"/>
</dbReference>
<dbReference type="Gene3D" id="3.10.130.10">
    <property type="entry name" value="Ribonuclease A-like domain"/>
    <property type="match status" value="1"/>
</dbReference>
<dbReference type="InterPro" id="IPR001427">
    <property type="entry name" value="RNaseA"/>
</dbReference>
<dbReference type="InterPro" id="IPR036816">
    <property type="entry name" value="RNaseA-like_dom_sf"/>
</dbReference>
<dbReference type="InterPro" id="IPR023412">
    <property type="entry name" value="RNaseA_domain"/>
</dbReference>
<dbReference type="PANTHER" id="PTHR11437:SF11">
    <property type="entry name" value="INACTIVE RIBONUCLEASE-LIKE PROTEIN 13-RELATED"/>
    <property type="match status" value="1"/>
</dbReference>
<dbReference type="PANTHER" id="PTHR11437">
    <property type="entry name" value="RIBONUCLEASE"/>
    <property type="match status" value="1"/>
</dbReference>
<dbReference type="Pfam" id="PF00074">
    <property type="entry name" value="RnaseA"/>
    <property type="match status" value="1"/>
</dbReference>
<dbReference type="SUPFAM" id="SSF54076">
    <property type="entry name" value="RNase A-like"/>
    <property type="match status" value="1"/>
</dbReference>
<proteinExistence type="evidence at protein level"/>
<sequence>MAPAVTRLLFLQLVLGPTLVMDIKMQIGSRNFYTLSIDYPRVNYPKGFRGYCNGLMSYMRGKMQNSDCPKIHYVIHAPWKAIQKFCKYSDSFCENYNEYCTLTQDSLPITVCSLSHQQPPTSCYYNSTLTNQKLYLLCSRKYEADPIGIAGLYSGI</sequence>
<comment type="function">
    <text evidence="2">Does not exhibit any ribonuclease activity.</text>
</comment>
<comment type="subcellular location">
    <subcellularLocation>
        <location evidence="2">Secreted</location>
    </subcellularLocation>
</comment>
<comment type="similarity">
    <text evidence="2">Belongs to the pancreatic ribonuclease family.</text>
</comment>